<gene>
    <name type="primary">SERPINA3-3</name>
</gene>
<proteinExistence type="evidence at protein level"/>
<comment type="function">
    <text evidence="3">Serine protease inhibitor. Strongly inhibits elastase and trypsin stoichiometrically at the molar ratio of 1:1. Acts as a moderate inhibitor of plasmin and chymotrypsin. Does not inhibit thrombin, urokinase, kallikrein, tissue plasminogen activator, cathepsin G or the cysteine proteases papain, cathepsin B or cathepsin L.</text>
</comment>
<comment type="subunit">
    <text evidence="3">Homodimer.</text>
</comment>
<comment type="subcellular location">
    <subcellularLocation>
        <location evidence="1">Cytoplasmic vesicle</location>
        <location evidence="1">Secretory vesicle</location>
        <location evidence="1">Chromaffin granule</location>
    </subcellularLocation>
    <subcellularLocation>
        <location evidence="1">Secreted</location>
    </subcellularLocation>
</comment>
<comment type="similarity">
    <text evidence="4">Belongs to the serpin family.</text>
</comment>
<accession>Q3ZEJ6</accession>
<accession>Q2T9M2</accession>
<name>SPA33_BOVIN</name>
<evidence type="ECO:0000250" key="1"/>
<evidence type="ECO:0000255" key="2"/>
<evidence type="ECO:0000269" key="3">
    <source>
    </source>
</evidence>
<evidence type="ECO:0000305" key="4"/>
<organism>
    <name type="scientific">Bos taurus</name>
    <name type="common">Bovine</name>
    <dbReference type="NCBI Taxonomy" id="9913"/>
    <lineage>
        <taxon>Eukaryota</taxon>
        <taxon>Metazoa</taxon>
        <taxon>Chordata</taxon>
        <taxon>Craniata</taxon>
        <taxon>Vertebrata</taxon>
        <taxon>Euteleostomi</taxon>
        <taxon>Mammalia</taxon>
        <taxon>Eutheria</taxon>
        <taxon>Laurasiatheria</taxon>
        <taxon>Artiodactyla</taxon>
        <taxon>Ruminantia</taxon>
        <taxon>Pecora</taxon>
        <taxon>Bovidae</taxon>
        <taxon>Bovinae</taxon>
        <taxon>Bos</taxon>
    </lineage>
</organism>
<protein>
    <recommendedName>
        <fullName>Serpin A3-3</fullName>
    </recommendedName>
    <alternativeName>
        <fullName>Endopin-1B</fullName>
    </alternativeName>
    <alternativeName>
        <fullName>Muscle endopin-1B</fullName>
        <shortName>mEndopin-1B</shortName>
    </alternativeName>
</protein>
<sequence>MRAERLSPLLALGLLVAGIRSVHCLPENVVVKDRHRRVDGHTLASSNTDFAFSLYKQLALKNPNKNVMFSPLSVSMALAFLSLGARGPTLTEILEGLKFNLTEIQETQIHQGFQHLLQALNRPRNQLQLSVGNAMFVQEELKLLDKFIEDARVLYSSEAFPTNFRDPEAAKSLINDYVKNKTQGKIEELFKDLSPRTELVLVNYVYFKAQWKTRFDPKHTEQAEFHVSDNKTVEVPMMTLDLETPYFRDEELGCTLVELTYTSNDSALFILPDKGKMQDLEAKLTPEMLTRWRNSLQPRRIHELYLPKFSIKSNYELNDTLSQMGIKKIFTDADLSGITGTADLVVSQVVHGAALDVDEEGTEGAAATGIGIERTFLRIIVRVNRPFLIAVVLKDTQSIIFLGKVTNPSEA</sequence>
<reference key="1">
    <citation type="journal article" date="2006" name="FEBS Lett.">
        <title>Purification of the skeletal muscle protein endopin 1B and characterization of the genes encoding endopin 1A and 1B isoforms.</title>
        <authorList>
            <person name="Herrera-Mendez C.H."/>
            <person name="Bremaud L."/>
            <person name="Coulis G."/>
            <person name="Pelissier P."/>
            <person name="Sentandreu M.A."/>
            <person name="Aubry L."/>
            <person name="Delourme D."/>
            <person name="Chambon C."/>
            <person name="Maftah A."/>
            <person name="Leveziel H."/>
            <person name="Ouali A."/>
        </authorList>
    </citation>
    <scope>NUCLEOTIDE SEQUENCE [GENOMIC DNA]</scope>
    <scope>PROTEIN SEQUENCE OF 25-37</scope>
    <scope>FUNCTION</scope>
    <scope>SUBUNIT</scope>
    <source>
        <tissue>Muscle</tissue>
    </source>
</reference>
<reference key="2">
    <citation type="submission" date="2005-12" db="EMBL/GenBank/DDBJ databases">
        <authorList>
            <consortium name="NIH - Mammalian Gene Collection (MGC) project"/>
        </authorList>
    </citation>
    <scope>NUCLEOTIDE SEQUENCE [LARGE SCALE MRNA]</scope>
    <source>
        <strain>Crossbred X Angus</strain>
        <tissue>Liver</tissue>
    </source>
</reference>
<reference key="3">
    <citation type="journal article" date="2008" name="BMC Genomics">
        <title>An original SERPINA3 gene cluster: elucidation of genomic organization and gene expression in the Bos taurus 21q24 region.</title>
        <authorList>
            <person name="Pelissier P."/>
            <person name="Delourme D."/>
            <person name="Germot A."/>
            <person name="Blanchet X."/>
            <person name="Becila S."/>
            <person name="Maftah A."/>
            <person name="Leveziel H."/>
            <person name="Ouali A."/>
            <person name="Bremaud L."/>
        </authorList>
    </citation>
    <scope>NOMENCLATURE</scope>
</reference>
<feature type="signal peptide" evidence="1">
    <location>
        <begin position="1"/>
        <end position="24"/>
    </location>
</feature>
<feature type="chain" id="PRO_0000392468" description="Serpin A3-3">
    <location>
        <begin position="25"/>
        <end position="411"/>
    </location>
</feature>
<feature type="site" description="Reactive bond" evidence="1">
    <location>
        <begin position="377"/>
        <end position="378"/>
    </location>
</feature>
<feature type="glycosylation site" description="N-linked (GlcNAc...) asparagine" evidence="2">
    <location>
        <position position="100"/>
    </location>
</feature>
<feature type="glycosylation site" description="N-linked (GlcNAc...) asparagine" evidence="2">
    <location>
        <position position="180"/>
    </location>
</feature>
<feature type="glycosylation site" description="N-linked (GlcNAc...) asparagine" evidence="2">
    <location>
        <position position="230"/>
    </location>
</feature>
<feature type="glycosylation site" description="N-linked (GlcNAc...) asparagine" evidence="2">
    <location>
        <position position="264"/>
    </location>
</feature>
<feature type="glycosylation site" description="N-linked (GlcNAc...) asparagine" evidence="2">
    <location>
        <position position="318"/>
    </location>
</feature>
<dbReference type="EMBL" id="BC111356">
    <property type="protein sequence ID" value="AAI11357.1"/>
    <property type="molecule type" value="mRNA"/>
</dbReference>
<dbReference type="EMBL" id="AY911537">
    <property type="protein sequence ID" value="AAY22406.2"/>
    <property type="molecule type" value="Genomic_DNA"/>
</dbReference>
<dbReference type="RefSeq" id="NP_001033293.1">
    <property type="nucleotide sequence ID" value="NM_001038204.2"/>
</dbReference>
<dbReference type="SMR" id="Q3ZEJ6"/>
<dbReference type="FunCoup" id="Q3ZEJ6">
    <property type="interactions" value="121"/>
</dbReference>
<dbReference type="IntAct" id="Q3ZEJ6">
    <property type="interactions" value="2"/>
</dbReference>
<dbReference type="MINT" id="Q3ZEJ6"/>
<dbReference type="STRING" id="9913.ENSBTAP00000055847"/>
<dbReference type="MEROPS" id="I04.027"/>
<dbReference type="GlyCosmos" id="Q3ZEJ6">
    <property type="glycosylation" value="5 sites, No reported glycans"/>
</dbReference>
<dbReference type="GlyGen" id="Q3ZEJ6">
    <property type="glycosylation" value="5 sites"/>
</dbReference>
<dbReference type="PaxDb" id="9913-ENSBTAP00000055847"/>
<dbReference type="GeneID" id="615103"/>
<dbReference type="KEGG" id="bta:615103"/>
<dbReference type="CTD" id="615103"/>
<dbReference type="eggNOG" id="KOG2392">
    <property type="taxonomic scope" value="Eukaryota"/>
</dbReference>
<dbReference type="InParanoid" id="Q3ZEJ6"/>
<dbReference type="OrthoDB" id="671595at2759"/>
<dbReference type="Proteomes" id="UP000009136">
    <property type="component" value="Unplaced"/>
</dbReference>
<dbReference type="GO" id="GO:0042583">
    <property type="term" value="C:chromaffin granule"/>
    <property type="evidence" value="ECO:0007669"/>
    <property type="project" value="UniProtKB-SubCell"/>
</dbReference>
<dbReference type="GO" id="GO:0031410">
    <property type="term" value="C:cytoplasmic vesicle"/>
    <property type="evidence" value="ECO:0000250"/>
    <property type="project" value="UniProtKB"/>
</dbReference>
<dbReference type="GO" id="GO:0005615">
    <property type="term" value="C:extracellular space"/>
    <property type="evidence" value="ECO:0000250"/>
    <property type="project" value="UniProtKB"/>
</dbReference>
<dbReference type="GO" id="GO:0004867">
    <property type="term" value="F:serine-type endopeptidase inhibitor activity"/>
    <property type="evidence" value="ECO:0000314"/>
    <property type="project" value="UniProtKB"/>
</dbReference>
<dbReference type="CDD" id="cd19551">
    <property type="entry name" value="serpinA3_A1AC"/>
    <property type="match status" value="1"/>
</dbReference>
<dbReference type="FunFam" id="3.30.497.10:FF:000001">
    <property type="entry name" value="Serine protease inhibitor"/>
    <property type="match status" value="1"/>
</dbReference>
<dbReference type="FunFam" id="2.30.39.10:FF:000002">
    <property type="entry name" value="Serpin family D member 1"/>
    <property type="match status" value="1"/>
</dbReference>
<dbReference type="Gene3D" id="2.30.39.10">
    <property type="entry name" value="Alpha-1-antitrypsin, domain 1"/>
    <property type="match status" value="1"/>
</dbReference>
<dbReference type="Gene3D" id="3.30.497.10">
    <property type="entry name" value="Antithrombin, subunit I, domain 2"/>
    <property type="match status" value="1"/>
</dbReference>
<dbReference type="InterPro" id="IPR023795">
    <property type="entry name" value="Serpin_CS"/>
</dbReference>
<dbReference type="InterPro" id="IPR023796">
    <property type="entry name" value="Serpin_dom"/>
</dbReference>
<dbReference type="InterPro" id="IPR000215">
    <property type="entry name" value="Serpin_fam"/>
</dbReference>
<dbReference type="InterPro" id="IPR036186">
    <property type="entry name" value="Serpin_sf"/>
</dbReference>
<dbReference type="InterPro" id="IPR042178">
    <property type="entry name" value="Serpin_sf_1"/>
</dbReference>
<dbReference type="InterPro" id="IPR042185">
    <property type="entry name" value="Serpin_sf_2"/>
</dbReference>
<dbReference type="PANTHER" id="PTHR11461:SF145">
    <property type="entry name" value="ALPHA-1-ANTICHYMOTRYPSIN"/>
    <property type="match status" value="1"/>
</dbReference>
<dbReference type="PANTHER" id="PTHR11461">
    <property type="entry name" value="SERINE PROTEASE INHIBITOR, SERPIN"/>
    <property type="match status" value="1"/>
</dbReference>
<dbReference type="Pfam" id="PF00079">
    <property type="entry name" value="Serpin"/>
    <property type="match status" value="1"/>
</dbReference>
<dbReference type="SMART" id="SM00093">
    <property type="entry name" value="SERPIN"/>
    <property type="match status" value="1"/>
</dbReference>
<dbReference type="SUPFAM" id="SSF56574">
    <property type="entry name" value="Serpins"/>
    <property type="match status" value="1"/>
</dbReference>
<dbReference type="PROSITE" id="PS00284">
    <property type="entry name" value="SERPIN"/>
    <property type="match status" value="1"/>
</dbReference>
<keyword id="KW-0968">Cytoplasmic vesicle</keyword>
<keyword id="KW-0903">Direct protein sequencing</keyword>
<keyword id="KW-0325">Glycoprotein</keyword>
<keyword id="KW-0646">Protease inhibitor</keyword>
<keyword id="KW-1185">Reference proteome</keyword>
<keyword id="KW-0964">Secreted</keyword>
<keyword id="KW-0722">Serine protease inhibitor</keyword>
<keyword id="KW-0732">Signal</keyword>